<dbReference type="EMBL" id="AABR06033849">
    <property type="status" value="NOT_ANNOTATED_CDS"/>
    <property type="molecule type" value="Genomic_DNA"/>
</dbReference>
<dbReference type="EMBL" id="AABR06033850">
    <property type="status" value="NOT_ANNOTATED_CDS"/>
    <property type="molecule type" value="Genomic_DNA"/>
</dbReference>
<dbReference type="EMBL" id="AABR06033851">
    <property type="status" value="NOT_ANNOTATED_CDS"/>
    <property type="molecule type" value="Genomic_DNA"/>
</dbReference>
<dbReference type="EMBL" id="CH473964">
    <property type="protein sequence ID" value="EDM01821.1"/>
    <property type="molecule type" value="Genomic_DNA"/>
</dbReference>
<dbReference type="RefSeq" id="NP_001100093.1">
    <property type="nucleotide sequence ID" value="NM_001106623.1"/>
</dbReference>
<dbReference type="RefSeq" id="XP_038963382.1">
    <property type="nucleotide sequence ID" value="XM_039107454.2"/>
</dbReference>
<dbReference type="SMR" id="D4A770"/>
<dbReference type="FunCoup" id="D4A770">
    <property type="interactions" value="4575"/>
</dbReference>
<dbReference type="STRING" id="10116.ENSRNOP00000074196"/>
<dbReference type="PhosphoSitePlus" id="D4A770"/>
<dbReference type="PaxDb" id="10116-ENSRNOP00000026838"/>
<dbReference type="PeptideAtlas" id="D4A770"/>
<dbReference type="Ensembl" id="ENSRNOT00000089513.2">
    <property type="protein sequence ID" value="ENSRNOP00000074196.1"/>
    <property type="gene ID" value="ENSRNOG00000055036.2"/>
</dbReference>
<dbReference type="GeneID" id="297607"/>
<dbReference type="KEGG" id="rno:297607"/>
<dbReference type="UCSC" id="RGD:1311164">
    <property type="organism name" value="rat"/>
</dbReference>
<dbReference type="AGR" id="RGD:1311164"/>
<dbReference type="CTD" id="57102"/>
<dbReference type="RGD" id="1311164">
    <property type="gene designation" value="Ferry3"/>
</dbReference>
<dbReference type="eggNOG" id="KOG4506">
    <property type="taxonomic scope" value="Eukaryota"/>
</dbReference>
<dbReference type="GeneTree" id="ENSGT00390000010229"/>
<dbReference type="HOGENOM" id="CLU_036084_0_0_1"/>
<dbReference type="InParanoid" id="D4A770"/>
<dbReference type="OMA" id="CKHKRSH"/>
<dbReference type="OrthoDB" id="415359at2759"/>
<dbReference type="PhylomeDB" id="D4A770"/>
<dbReference type="TreeFam" id="TF314243"/>
<dbReference type="PRO" id="PR:D4A770"/>
<dbReference type="Proteomes" id="UP000002494">
    <property type="component" value="Chromosome 4"/>
</dbReference>
<dbReference type="Proteomes" id="UP000234681">
    <property type="component" value="Chromosome 4"/>
</dbReference>
<dbReference type="Bgee" id="ENSRNOG00000055036">
    <property type="expression patterns" value="Expressed in cerebellum and 19 other cell types or tissues"/>
</dbReference>
<dbReference type="GO" id="GO:0005737">
    <property type="term" value="C:cytoplasm"/>
    <property type="evidence" value="ECO:0000314"/>
    <property type="project" value="UniProtKB"/>
</dbReference>
<dbReference type="GO" id="GO:0005769">
    <property type="term" value="C:early endosome"/>
    <property type="evidence" value="ECO:0000250"/>
    <property type="project" value="UniProtKB"/>
</dbReference>
<dbReference type="GO" id="GO:0032991">
    <property type="term" value="C:protein-containing complex"/>
    <property type="evidence" value="ECO:0000266"/>
    <property type="project" value="RGD"/>
</dbReference>
<dbReference type="GO" id="GO:0043304">
    <property type="term" value="P:regulation of mast cell degranulation"/>
    <property type="evidence" value="ECO:0000314"/>
    <property type="project" value="UniProtKB"/>
</dbReference>
<dbReference type="InterPro" id="IPR019311">
    <property type="entry name" value="Fy-3"/>
</dbReference>
<dbReference type="PANTHER" id="PTHR16525">
    <property type="entry name" value="PROTEIN C12ORF4"/>
    <property type="match status" value="1"/>
</dbReference>
<dbReference type="PANTHER" id="PTHR16525:SF0">
    <property type="entry name" value="PROTEIN C12ORF4"/>
    <property type="match status" value="1"/>
</dbReference>
<dbReference type="Pfam" id="PF10154">
    <property type="entry name" value="Fy-3"/>
    <property type="match status" value="1"/>
</dbReference>
<proteinExistence type="evidence at protein level"/>
<comment type="function">
    <text evidence="2 3">Component of the FERRY complex (Five-subunit Endosomal Rab5 and RNA/ribosome intermediary). The FERRY complex directly interacts with mRNAs and RAB5A, and functions as a RAB5A effector involved in the localization and the distribution of specific mRNAs most likely by mediating their endosomal transport. The complex recruits mRNAs and ribosomes to early endosomes through direct mRNA-interaction (By similarity). Plays a role in mast cell degranulation (PubMed:25122211).</text>
</comment>
<comment type="subunit">
    <text evidence="2">Component of the FERRY complex composed of five subunits, TBCK, PPP1R21, FERRY3, CRYZL1 and GATD1 with a ratio of 1:2:1:2:4, respectively.</text>
</comment>
<comment type="subcellular location">
    <subcellularLocation>
        <location evidence="3">Cytoplasm</location>
    </subcellularLocation>
    <subcellularLocation>
        <location evidence="2">Early endosome</location>
    </subcellularLocation>
</comment>
<evidence type="ECO:0000250" key="1">
    <source>
        <dbReference type="UniProtKB" id="Q91YN0"/>
    </source>
</evidence>
<evidence type="ECO:0000250" key="2">
    <source>
        <dbReference type="UniProtKB" id="Q9NQ89"/>
    </source>
</evidence>
<evidence type="ECO:0000269" key="3">
    <source>
    </source>
</evidence>
<evidence type="ECO:0000312" key="4">
    <source>
        <dbReference type="RGD" id="1311164"/>
    </source>
</evidence>
<protein>
    <recommendedName>
        <fullName>FERRY endosomal RAB5 effector complex subunit 3</fullName>
    </recommendedName>
</protein>
<organism>
    <name type="scientific">Rattus norvegicus</name>
    <name type="common">Rat</name>
    <dbReference type="NCBI Taxonomy" id="10116"/>
    <lineage>
        <taxon>Eukaryota</taxon>
        <taxon>Metazoa</taxon>
        <taxon>Chordata</taxon>
        <taxon>Craniata</taxon>
        <taxon>Vertebrata</taxon>
        <taxon>Euteleostomi</taxon>
        <taxon>Mammalia</taxon>
        <taxon>Eutheria</taxon>
        <taxon>Euarchontoglires</taxon>
        <taxon>Glires</taxon>
        <taxon>Rodentia</taxon>
        <taxon>Myomorpha</taxon>
        <taxon>Muroidea</taxon>
        <taxon>Muridae</taxon>
        <taxon>Murinae</taxon>
        <taxon>Rattus</taxon>
    </lineage>
</organism>
<gene>
    <name evidence="4" type="primary">Ferry3</name>
</gene>
<accession>D4A770</accession>
<sequence>MKKNRERFSSKEREFVYKFQIGSERLELRVPLRFPVDENASHLHGRLMLLHSLPCFIENDLKEALARFIEEESLRDHDSDAEACLEAVKSGEVDLHQLASTWAKAYAETTLEHARPEEPNWDEDFADVYHDLIHSPASETLLNLEHNYFVSISELIGERDVELKKLRERQGIEMEKVMQELGKSLTDQDVNSLAAQHFESQQDLENKWSNELKQSTAIQKQEYQEWVIKLHQDLKNPNNSSLSEEIKVQPSQFRESADAAGRIYEEQRKLEESFTIHLGAQLKTMHNLRLLRADMLDFCKHKRTQGSGVKLHRLQTALSLYSTSLCGLVLLVDNRINSYSGIKRDFATVCQECTDFHFPRIEEQLEVVQQVALYARTQRRSKCKEARDSGNQNGGSDEKSKNAERNYLNILPGEFYITRHSNLSEIHVAFHLCVDDNVKSGNITARDPAIMGLRNILKVCCTHDITTISIPLLLVHDMSEEMTIPWCLRRAELVFKCVKGFMMEMASWDGGISRTVQFLVPQSISEEMFYQLSNMLPQIFRVSSTLTLTSKH</sequence>
<name>FERY3_RAT</name>
<keyword id="KW-0963">Cytoplasm</keyword>
<keyword id="KW-0967">Endosome</keyword>
<keyword id="KW-0597">Phosphoprotein</keyword>
<keyword id="KW-1185">Reference proteome</keyword>
<reference key="1">
    <citation type="journal article" date="2004" name="Nature">
        <title>Genome sequence of the Brown Norway rat yields insights into mammalian evolution.</title>
        <authorList>
            <person name="Gibbs R.A."/>
            <person name="Weinstock G.M."/>
            <person name="Metzker M.L."/>
            <person name="Muzny D.M."/>
            <person name="Sodergren E.J."/>
            <person name="Scherer S."/>
            <person name="Scott G."/>
            <person name="Steffen D."/>
            <person name="Worley K.C."/>
            <person name="Burch P.E."/>
            <person name="Okwuonu G."/>
            <person name="Hines S."/>
            <person name="Lewis L."/>
            <person name="Deramo C."/>
            <person name="Delgado O."/>
            <person name="Dugan-Rocha S."/>
            <person name="Miner G."/>
            <person name="Morgan M."/>
            <person name="Hawes A."/>
            <person name="Gill R."/>
            <person name="Holt R.A."/>
            <person name="Adams M.D."/>
            <person name="Amanatides P.G."/>
            <person name="Baden-Tillson H."/>
            <person name="Barnstead M."/>
            <person name="Chin S."/>
            <person name="Evans C.A."/>
            <person name="Ferriera S."/>
            <person name="Fosler C."/>
            <person name="Glodek A."/>
            <person name="Gu Z."/>
            <person name="Jennings D."/>
            <person name="Kraft C.L."/>
            <person name="Nguyen T."/>
            <person name="Pfannkoch C.M."/>
            <person name="Sitter C."/>
            <person name="Sutton G.G."/>
            <person name="Venter J.C."/>
            <person name="Woodage T."/>
            <person name="Smith D."/>
            <person name="Lee H.-M."/>
            <person name="Gustafson E."/>
            <person name="Cahill P."/>
            <person name="Kana A."/>
            <person name="Doucette-Stamm L."/>
            <person name="Weinstock K."/>
            <person name="Fechtel K."/>
            <person name="Weiss R.B."/>
            <person name="Dunn D.M."/>
            <person name="Green E.D."/>
            <person name="Blakesley R.W."/>
            <person name="Bouffard G.G."/>
            <person name="De Jong P.J."/>
            <person name="Osoegawa K."/>
            <person name="Zhu B."/>
            <person name="Marra M."/>
            <person name="Schein J."/>
            <person name="Bosdet I."/>
            <person name="Fjell C."/>
            <person name="Jones S."/>
            <person name="Krzywinski M."/>
            <person name="Mathewson C."/>
            <person name="Siddiqui A."/>
            <person name="Wye N."/>
            <person name="McPherson J."/>
            <person name="Zhao S."/>
            <person name="Fraser C.M."/>
            <person name="Shetty J."/>
            <person name="Shatsman S."/>
            <person name="Geer K."/>
            <person name="Chen Y."/>
            <person name="Abramzon S."/>
            <person name="Nierman W.C."/>
            <person name="Havlak P.H."/>
            <person name="Chen R."/>
            <person name="Durbin K.J."/>
            <person name="Egan A."/>
            <person name="Ren Y."/>
            <person name="Song X.-Z."/>
            <person name="Li B."/>
            <person name="Liu Y."/>
            <person name="Qin X."/>
            <person name="Cawley S."/>
            <person name="Cooney A.J."/>
            <person name="D'Souza L.M."/>
            <person name="Martin K."/>
            <person name="Wu J.Q."/>
            <person name="Gonzalez-Garay M.L."/>
            <person name="Jackson A.R."/>
            <person name="Kalafus K.J."/>
            <person name="McLeod M.P."/>
            <person name="Milosavljevic A."/>
            <person name="Virk D."/>
            <person name="Volkov A."/>
            <person name="Wheeler D.A."/>
            <person name="Zhang Z."/>
            <person name="Bailey J.A."/>
            <person name="Eichler E.E."/>
            <person name="Tuzun E."/>
            <person name="Birney E."/>
            <person name="Mongin E."/>
            <person name="Ureta-Vidal A."/>
            <person name="Woodwark C."/>
            <person name="Zdobnov E."/>
            <person name="Bork P."/>
            <person name="Suyama M."/>
            <person name="Torrents D."/>
            <person name="Alexandersson M."/>
            <person name="Trask B.J."/>
            <person name="Young J.M."/>
            <person name="Huang H."/>
            <person name="Wang H."/>
            <person name="Xing H."/>
            <person name="Daniels S."/>
            <person name="Gietzen D."/>
            <person name="Schmidt J."/>
            <person name="Stevens K."/>
            <person name="Vitt U."/>
            <person name="Wingrove J."/>
            <person name="Camara F."/>
            <person name="Mar Alba M."/>
            <person name="Abril J.F."/>
            <person name="Guigo R."/>
            <person name="Smit A."/>
            <person name="Dubchak I."/>
            <person name="Rubin E.M."/>
            <person name="Couronne O."/>
            <person name="Poliakov A."/>
            <person name="Huebner N."/>
            <person name="Ganten D."/>
            <person name="Goesele C."/>
            <person name="Hummel O."/>
            <person name="Kreitler T."/>
            <person name="Lee Y.-A."/>
            <person name="Monti J."/>
            <person name="Schulz H."/>
            <person name="Zimdahl H."/>
            <person name="Himmelbauer H."/>
            <person name="Lehrach H."/>
            <person name="Jacob H.J."/>
            <person name="Bromberg S."/>
            <person name="Gullings-Handley J."/>
            <person name="Jensen-Seaman M.I."/>
            <person name="Kwitek A.E."/>
            <person name="Lazar J."/>
            <person name="Pasko D."/>
            <person name="Tonellato P.J."/>
            <person name="Twigger S."/>
            <person name="Ponting C.P."/>
            <person name="Duarte J.M."/>
            <person name="Rice S."/>
            <person name="Goodstadt L."/>
            <person name="Beatson S.A."/>
            <person name="Emes R.D."/>
            <person name="Winter E.E."/>
            <person name="Webber C."/>
            <person name="Brandt P."/>
            <person name="Nyakatura G."/>
            <person name="Adetobi M."/>
            <person name="Chiaromonte F."/>
            <person name="Elnitski L."/>
            <person name="Eswara P."/>
            <person name="Hardison R.C."/>
            <person name="Hou M."/>
            <person name="Kolbe D."/>
            <person name="Makova K."/>
            <person name="Miller W."/>
            <person name="Nekrutenko A."/>
            <person name="Riemer C."/>
            <person name="Schwartz S."/>
            <person name="Taylor J."/>
            <person name="Yang S."/>
            <person name="Zhang Y."/>
            <person name="Lindpaintner K."/>
            <person name="Andrews T.D."/>
            <person name="Caccamo M."/>
            <person name="Clamp M."/>
            <person name="Clarke L."/>
            <person name="Curwen V."/>
            <person name="Durbin R.M."/>
            <person name="Eyras E."/>
            <person name="Searle S.M."/>
            <person name="Cooper G.M."/>
            <person name="Batzoglou S."/>
            <person name="Brudno M."/>
            <person name="Sidow A."/>
            <person name="Stone E.A."/>
            <person name="Payseur B.A."/>
            <person name="Bourque G."/>
            <person name="Lopez-Otin C."/>
            <person name="Puente X.S."/>
            <person name="Chakrabarti K."/>
            <person name="Chatterji S."/>
            <person name="Dewey C."/>
            <person name="Pachter L."/>
            <person name="Bray N."/>
            <person name="Yap V.B."/>
            <person name="Caspi A."/>
            <person name="Tesler G."/>
            <person name="Pevzner P.A."/>
            <person name="Haussler D."/>
            <person name="Roskin K.M."/>
            <person name="Baertsch R."/>
            <person name="Clawson H."/>
            <person name="Furey T.S."/>
            <person name="Hinrichs A.S."/>
            <person name="Karolchik D."/>
            <person name="Kent W.J."/>
            <person name="Rosenbloom K.R."/>
            <person name="Trumbower H."/>
            <person name="Weirauch M."/>
            <person name="Cooper D.N."/>
            <person name="Stenson P.D."/>
            <person name="Ma B."/>
            <person name="Brent M."/>
            <person name="Arumugam M."/>
            <person name="Shteynberg D."/>
            <person name="Copley R.R."/>
            <person name="Taylor M.S."/>
            <person name="Riethman H."/>
            <person name="Mudunuri U."/>
            <person name="Peterson J."/>
            <person name="Guyer M."/>
            <person name="Felsenfeld A."/>
            <person name="Old S."/>
            <person name="Mockrin S."/>
            <person name="Collins F.S."/>
        </authorList>
    </citation>
    <scope>NUCLEOTIDE SEQUENCE [LARGE SCALE GENOMIC DNA]</scope>
    <source>
        <strain>Brown Norway</strain>
    </source>
</reference>
<reference key="2">
    <citation type="submission" date="2005-09" db="EMBL/GenBank/DDBJ databases">
        <authorList>
            <person name="Mural R.J."/>
            <person name="Adams M.D."/>
            <person name="Myers E.W."/>
            <person name="Smith H.O."/>
            <person name="Venter J.C."/>
        </authorList>
    </citation>
    <scope>NUCLEOTIDE SEQUENCE [LARGE SCALE GENOMIC DNA]</scope>
    <source>
        <strain>Brown Norway</strain>
    </source>
</reference>
<reference key="3">
    <citation type="journal article" date="2014" name="PLoS ONE">
        <title>In-cell intrabody selection from a diverse human library identifies C12orf4 protein as a new player in rodent mast cell degranulation.</title>
        <authorList>
            <person name="Mazuc E."/>
            <person name="Guglielmi L."/>
            <person name="Bec N."/>
            <person name="Parez V."/>
            <person name="Hahn C.S."/>
            <person name="Mollevi C."/>
            <person name="Parrinello H."/>
            <person name="Desvignes J.P."/>
            <person name="Larroque C."/>
            <person name="Jupp R."/>
            <person name="Dariavach P."/>
            <person name="Martineau P."/>
        </authorList>
    </citation>
    <scope>SUBCELLULAR LOCATION</scope>
    <scope>IDENTIFICATION BY MASS SPECTROMETRY</scope>
    <scope>FUNCTION</scope>
</reference>
<feature type="chain" id="PRO_0000431922" description="FERRY endosomal RAB5 effector complex subunit 3">
    <location>
        <begin position="1"/>
        <end position="552"/>
    </location>
</feature>
<feature type="modified residue" description="Phosphoserine" evidence="1">
    <location>
        <position position="79"/>
    </location>
</feature>